<dbReference type="EMBL" id="AK014491">
    <property type="protein sequence ID" value="BAB29391.1"/>
    <property type="molecule type" value="mRNA"/>
</dbReference>
<dbReference type="CCDS" id="CCDS26187.1"/>
<dbReference type="RefSeq" id="NP_083151.1">
    <property type="nucleotide sequence ID" value="NM_028875.4"/>
</dbReference>
<dbReference type="RefSeq" id="XP_030102819.1">
    <property type="nucleotide sequence ID" value="XM_030246959.2"/>
</dbReference>
<dbReference type="SMR" id="Q9CXE6"/>
<dbReference type="BioGRID" id="216673">
    <property type="interactions" value="5"/>
</dbReference>
<dbReference type="FunCoup" id="Q9CXE6">
    <property type="interactions" value="2574"/>
</dbReference>
<dbReference type="STRING" id="10090.ENSMUSP00000021715"/>
<dbReference type="iPTMnet" id="Q9CXE6"/>
<dbReference type="PhosphoSitePlus" id="Q9CXE6"/>
<dbReference type="PaxDb" id="10090-ENSMUSP00000021715"/>
<dbReference type="ProteomicsDB" id="297655"/>
<dbReference type="Pumba" id="Q9CXE6"/>
<dbReference type="Antibodypedia" id="14778">
    <property type="antibodies" value="604 antibodies from 35 providers"/>
</dbReference>
<dbReference type="DNASU" id="74335"/>
<dbReference type="Ensembl" id="ENSMUST00000021715.6">
    <property type="protein sequence ID" value="ENSMUSP00000021715.6"/>
    <property type="gene ID" value="ENSMUSG00000021287.13"/>
</dbReference>
<dbReference type="GeneID" id="74335"/>
<dbReference type="KEGG" id="mmu:74335"/>
<dbReference type="UCSC" id="uc007pdz.1">
    <property type="organism name" value="mouse"/>
</dbReference>
<dbReference type="AGR" id="MGI:1921585"/>
<dbReference type="CTD" id="7517"/>
<dbReference type="MGI" id="MGI:1921585">
    <property type="gene designation" value="Xrcc3"/>
</dbReference>
<dbReference type="VEuPathDB" id="HostDB:ENSMUSG00000021287"/>
<dbReference type="eggNOG" id="KOG1564">
    <property type="taxonomic scope" value="Eukaryota"/>
</dbReference>
<dbReference type="GeneTree" id="ENSGT00930000151053"/>
<dbReference type="InParanoid" id="Q9CXE6"/>
<dbReference type="OMA" id="WANQVTV"/>
<dbReference type="OrthoDB" id="1861185at2759"/>
<dbReference type="PhylomeDB" id="Q9CXE6"/>
<dbReference type="TreeFam" id="TF101203"/>
<dbReference type="Reactome" id="R-MMU-5685942">
    <property type="pathway name" value="HDR through Homologous Recombination (HRR)"/>
</dbReference>
<dbReference type="Reactome" id="R-MMU-5693568">
    <property type="pathway name" value="Resolution of D-loop Structures through Holliday Junction Intermediates"/>
</dbReference>
<dbReference type="Reactome" id="R-MMU-5693579">
    <property type="pathway name" value="Homologous DNA Pairing and Strand Exchange"/>
</dbReference>
<dbReference type="BioGRID-ORCS" id="74335">
    <property type="hits" value="31 hits in 114 CRISPR screens"/>
</dbReference>
<dbReference type="ChiTaRS" id="Xrcc3">
    <property type="organism name" value="mouse"/>
</dbReference>
<dbReference type="PRO" id="PR:Q9CXE6"/>
<dbReference type="Proteomes" id="UP000000589">
    <property type="component" value="Chromosome 12"/>
</dbReference>
<dbReference type="RNAct" id="Q9CXE6">
    <property type="molecule type" value="protein"/>
</dbReference>
<dbReference type="Bgee" id="ENSMUSG00000021287">
    <property type="expression patterns" value="Expressed in yolk sac and 208 other cell types or tissues"/>
</dbReference>
<dbReference type="ExpressionAtlas" id="Q9CXE6">
    <property type="expression patterns" value="baseline and differential"/>
</dbReference>
<dbReference type="GO" id="GO:0005737">
    <property type="term" value="C:cytoplasm"/>
    <property type="evidence" value="ECO:0000250"/>
    <property type="project" value="UniProtKB"/>
</dbReference>
<dbReference type="GO" id="GO:0005829">
    <property type="term" value="C:cytosol"/>
    <property type="evidence" value="ECO:0007669"/>
    <property type="project" value="Ensembl"/>
</dbReference>
<dbReference type="GO" id="GO:0005759">
    <property type="term" value="C:mitochondrial matrix"/>
    <property type="evidence" value="ECO:0007669"/>
    <property type="project" value="UniProtKB-SubCell"/>
</dbReference>
<dbReference type="GO" id="GO:0005654">
    <property type="term" value="C:nucleoplasm"/>
    <property type="evidence" value="ECO:0007669"/>
    <property type="project" value="Ensembl"/>
</dbReference>
<dbReference type="GO" id="GO:0005634">
    <property type="term" value="C:nucleus"/>
    <property type="evidence" value="ECO:0000250"/>
    <property type="project" value="UniProtKB"/>
</dbReference>
<dbReference type="GO" id="GO:0048471">
    <property type="term" value="C:perinuclear region of cytoplasm"/>
    <property type="evidence" value="ECO:0000250"/>
    <property type="project" value="UniProtKB"/>
</dbReference>
<dbReference type="GO" id="GO:0033065">
    <property type="term" value="C:Rad51C-XRCC3 complex"/>
    <property type="evidence" value="ECO:0000250"/>
    <property type="project" value="UniProtKB"/>
</dbReference>
<dbReference type="GO" id="GO:0005657">
    <property type="term" value="C:replication fork"/>
    <property type="evidence" value="ECO:0000250"/>
    <property type="project" value="UniProtKB"/>
</dbReference>
<dbReference type="GO" id="GO:0005524">
    <property type="term" value="F:ATP binding"/>
    <property type="evidence" value="ECO:0007669"/>
    <property type="project" value="UniProtKB-KW"/>
</dbReference>
<dbReference type="GO" id="GO:0140664">
    <property type="term" value="F:ATP-dependent DNA damage sensor activity"/>
    <property type="evidence" value="ECO:0007669"/>
    <property type="project" value="InterPro"/>
</dbReference>
<dbReference type="GO" id="GO:0008821">
    <property type="term" value="F:crossover junction DNA endonuclease activity"/>
    <property type="evidence" value="ECO:0007669"/>
    <property type="project" value="Ensembl"/>
</dbReference>
<dbReference type="GO" id="GO:0000400">
    <property type="term" value="F:four-way junction DNA binding"/>
    <property type="evidence" value="ECO:0007669"/>
    <property type="project" value="Ensembl"/>
</dbReference>
<dbReference type="GO" id="GO:0000724">
    <property type="term" value="P:double-strand break repair via homologous recombination"/>
    <property type="evidence" value="ECO:0000250"/>
    <property type="project" value="UniProtKB"/>
</dbReference>
<dbReference type="GO" id="GO:0036297">
    <property type="term" value="P:interstrand cross-link repair"/>
    <property type="evidence" value="ECO:0007669"/>
    <property type="project" value="Ensembl"/>
</dbReference>
<dbReference type="GO" id="GO:0090267">
    <property type="term" value="P:positive regulation of mitotic cell cycle spindle assembly checkpoint"/>
    <property type="evidence" value="ECO:0000250"/>
    <property type="project" value="UniProtKB"/>
</dbReference>
<dbReference type="GO" id="GO:0010824">
    <property type="term" value="P:regulation of centrosome duplication"/>
    <property type="evidence" value="ECO:0000250"/>
    <property type="project" value="UniProtKB"/>
</dbReference>
<dbReference type="GO" id="GO:0071140">
    <property type="term" value="P:resolution of mitotic recombination intermediates"/>
    <property type="evidence" value="ECO:0000250"/>
    <property type="project" value="UniProtKB"/>
</dbReference>
<dbReference type="GO" id="GO:0090656">
    <property type="term" value="P:t-circle formation"/>
    <property type="evidence" value="ECO:0007669"/>
    <property type="project" value="Ensembl"/>
</dbReference>
<dbReference type="GO" id="GO:0000722">
    <property type="term" value="P:telomere maintenance via recombination"/>
    <property type="evidence" value="ECO:0007669"/>
    <property type="project" value="Ensembl"/>
</dbReference>
<dbReference type="CDD" id="cd19491">
    <property type="entry name" value="XRCC3"/>
    <property type="match status" value="1"/>
</dbReference>
<dbReference type="FunFam" id="3.40.50.300:FF:001223">
    <property type="entry name" value="X-ray repair cross complementing 3"/>
    <property type="match status" value="1"/>
</dbReference>
<dbReference type="Gene3D" id="3.40.50.300">
    <property type="entry name" value="P-loop containing nucleotide triphosphate hydrolases"/>
    <property type="match status" value="1"/>
</dbReference>
<dbReference type="InterPro" id="IPR013632">
    <property type="entry name" value="DNA_recomb/repair_Rad51_C"/>
</dbReference>
<dbReference type="InterPro" id="IPR016467">
    <property type="entry name" value="DNA_recomb/repair_RecA-like"/>
</dbReference>
<dbReference type="InterPro" id="IPR027417">
    <property type="entry name" value="P-loop_NTPase"/>
</dbReference>
<dbReference type="InterPro" id="IPR020588">
    <property type="entry name" value="RecA_ATP-bd"/>
</dbReference>
<dbReference type="InterPro" id="IPR047348">
    <property type="entry name" value="XRCC3-like_C"/>
</dbReference>
<dbReference type="PANTHER" id="PTHR46487">
    <property type="entry name" value="DNA REPAIR PROTEIN XRCC3"/>
    <property type="match status" value="1"/>
</dbReference>
<dbReference type="PANTHER" id="PTHR46487:SF1">
    <property type="entry name" value="DNA REPAIR PROTEIN XRCC3"/>
    <property type="match status" value="1"/>
</dbReference>
<dbReference type="Pfam" id="PF08423">
    <property type="entry name" value="Rad51"/>
    <property type="match status" value="1"/>
</dbReference>
<dbReference type="PIRSF" id="PIRSF005856">
    <property type="entry name" value="Rad51"/>
    <property type="match status" value="1"/>
</dbReference>
<dbReference type="SUPFAM" id="SSF52540">
    <property type="entry name" value="P-loop containing nucleoside triphosphate hydrolases"/>
    <property type="match status" value="1"/>
</dbReference>
<dbReference type="PROSITE" id="PS50162">
    <property type="entry name" value="RECA_2"/>
    <property type="match status" value="1"/>
</dbReference>
<comment type="function">
    <text evidence="1">Involved in the homologous recombination repair (HRR) pathway of double-stranded DNA, thought to repair chromosomal fragmentation, translocations and deletions. Part of the RAD21 paralog protein complex CX3 which acts in the BRCA1-BRCA2-dependent HR pathway. Upon DNA damage, CX3 acts downstream of RAD51 recruitment; the complex binds predominantly to the intersection of the four duplex arms of the Holliday junction (HJ) and to junctions of replication forks. Involved in HJ resolution and thus in processing HR intermediates late in the DNA repair process; the function may be linked to the CX3 complex and seems to involve GEN1 during mitotic cell cycle progression. Part of a PALB2-scaffolded HR complex containing BRCA2 and RAD51C and which is thought to play a role in DNA repair by HR. Plays a role in regulating mitochondrial DNA copy number under conditions of oxidative stress in the presence of RAD51 and RAD51C (By similarity).</text>
</comment>
<comment type="subunit">
    <text evidence="1">Interacts with RAD51C and RAD51. Part of the CX3 complex consisting of RAD51C and XRCC3; the complex has a ring-like structure arranged into a flat disc around a central channel; CX3 can interact with RAD51 in vitro. Forms a complex with FANCD2, BRCA2 and phosphorylated FANCG. Interacts with SWSAP1 and ZSWIM7; involved in homologous recombination repair. Interacts directly with PALB2 which may serve as a scaffold for a HR complex containing PALB2, BRCA2, RAD51C, RAD51 and XRCC3 (By similarity).</text>
</comment>
<comment type="subcellular location">
    <subcellularLocation>
        <location evidence="1">Nucleus</location>
    </subcellularLocation>
    <subcellularLocation>
        <location evidence="1">Cytoplasm</location>
    </subcellularLocation>
    <subcellularLocation>
        <location evidence="1">Cytoplasm</location>
        <location evidence="1">Perinuclear region</location>
    </subcellularLocation>
    <subcellularLocation>
        <location evidence="1">Mitochondrion matrix</location>
    </subcellularLocation>
    <text evidence="1">Accumulates in discrete nuclear foci prior to DNA damage, and these foci persist throughout the time course of DNA repair.</text>
</comment>
<comment type="similarity">
    <text evidence="4">Belongs to the RecA family. RAD51 subfamily.</text>
</comment>
<gene>
    <name type="primary">Xrcc3</name>
</gene>
<feature type="chain" id="PRO_0000122952" description="DNA repair protein XRCC3">
    <location>
        <begin position="1"/>
        <end position="349"/>
    </location>
</feature>
<feature type="binding site" evidence="3">
    <location>
        <begin position="107"/>
        <end position="114"/>
    </location>
    <ligand>
        <name>ATP</name>
        <dbReference type="ChEBI" id="CHEBI:30616"/>
    </ligand>
</feature>
<feature type="modified residue" description="N-acetylmethionine" evidence="2">
    <location>
        <position position="1"/>
    </location>
</feature>
<evidence type="ECO:0000250" key="1"/>
<evidence type="ECO:0000250" key="2">
    <source>
        <dbReference type="UniProtKB" id="O43542"/>
    </source>
</evidence>
<evidence type="ECO:0000255" key="3"/>
<evidence type="ECO:0000305" key="4"/>
<keyword id="KW-0007">Acetylation</keyword>
<keyword id="KW-0067">ATP-binding</keyword>
<keyword id="KW-0963">Cytoplasm</keyword>
<keyword id="KW-0227">DNA damage</keyword>
<keyword id="KW-0233">DNA recombination</keyword>
<keyword id="KW-0234">DNA repair</keyword>
<keyword id="KW-0238">DNA-binding</keyword>
<keyword id="KW-0496">Mitochondrion</keyword>
<keyword id="KW-0547">Nucleotide-binding</keyword>
<keyword id="KW-0539">Nucleus</keyword>
<keyword id="KW-1185">Reference proteome</keyword>
<organism>
    <name type="scientific">Mus musculus</name>
    <name type="common">Mouse</name>
    <dbReference type="NCBI Taxonomy" id="10090"/>
    <lineage>
        <taxon>Eukaryota</taxon>
        <taxon>Metazoa</taxon>
        <taxon>Chordata</taxon>
        <taxon>Craniata</taxon>
        <taxon>Vertebrata</taxon>
        <taxon>Euteleostomi</taxon>
        <taxon>Mammalia</taxon>
        <taxon>Eutheria</taxon>
        <taxon>Euarchontoglires</taxon>
        <taxon>Glires</taxon>
        <taxon>Rodentia</taxon>
        <taxon>Myomorpha</taxon>
        <taxon>Muroidea</taxon>
        <taxon>Muridae</taxon>
        <taxon>Murinae</taxon>
        <taxon>Mus</taxon>
        <taxon>Mus</taxon>
    </lineage>
</organism>
<name>XRCC3_MOUSE</name>
<protein>
    <recommendedName>
        <fullName>DNA repair protein XRCC3</fullName>
    </recommendedName>
    <alternativeName>
        <fullName>X-ray repair cross-complementing protein 3</fullName>
    </alternativeName>
</protein>
<sequence>MDLDQLDLNPRITAAVKRGRLKSVKEILCYSGPDLQRLTGLPSHDVQCLLRAASLHLRGSRVLSALHLFQQKESFPEQHQRLSLGCPVLDQFLGGGLPLEGITGLAGCSSAGKTQLALQLCLAVQFPRQYGGLEAGAVYICTEDAFPSKRLWQLIAQQRRLRTDAPEELIEKIRFSNHIFIEHAADVDTLLECVSKKVPILLSRGMARLVVVDSIAAPFRCEFHLQASAIRAKLLLSLGATLRRLSSTFRSPVLCINQVTDMVEDQQSVSRSLGASEERLSPALGITWANQLLMRLMVDRTHEDDVTTGLPRSPVRTLRVLFAPHLPLSSCCYTVSGEGIRGMPGTQSY</sequence>
<proteinExistence type="evidence at transcript level"/>
<reference key="1">
    <citation type="journal article" date="2005" name="Science">
        <title>The transcriptional landscape of the mammalian genome.</title>
        <authorList>
            <person name="Carninci P."/>
            <person name="Kasukawa T."/>
            <person name="Katayama S."/>
            <person name="Gough J."/>
            <person name="Frith M.C."/>
            <person name="Maeda N."/>
            <person name="Oyama R."/>
            <person name="Ravasi T."/>
            <person name="Lenhard B."/>
            <person name="Wells C."/>
            <person name="Kodzius R."/>
            <person name="Shimokawa K."/>
            <person name="Bajic V.B."/>
            <person name="Brenner S.E."/>
            <person name="Batalov S."/>
            <person name="Forrest A.R."/>
            <person name="Zavolan M."/>
            <person name="Davis M.J."/>
            <person name="Wilming L.G."/>
            <person name="Aidinis V."/>
            <person name="Allen J.E."/>
            <person name="Ambesi-Impiombato A."/>
            <person name="Apweiler R."/>
            <person name="Aturaliya R.N."/>
            <person name="Bailey T.L."/>
            <person name="Bansal M."/>
            <person name="Baxter L."/>
            <person name="Beisel K.W."/>
            <person name="Bersano T."/>
            <person name="Bono H."/>
            <person name="Chalk A.M."/>
            <person name="Chiu K.P."/>
            <person name="Choudhary V."/>
            <person name="Christoffels A."/>
            <person name="Clutterbuck D.R."/>
            <person name="Crowe M.L."/>
            <person name="Dalla E."/>
            <person name="Dalrymple B.P."/>
            <person name="de Bono B."/>
            <person name="Della Gatta G."/>
            <person name="di Bernardo D."/>
            <person name="Down T."/>
            <person name="Engstrom P."/>
            <person name="Fagiolini M."/>
            <person name="Faulkner G."/>
            <person name="Fletcher C.F."/>
            <person name="Fukushima T."/>
            <person name="Furuno M."/>
            <person name="Futaki S."/>
            <person name="Gariboldi M."/>
            <person name="Georgii-Hemming P."/>
            <person name="Gingeras T.R."/>
            <person name="Gojobori T."/>
            <person name="Green R.E."/>
            <person name="Gustincich S."/>
            <person name="Harbers M."/>
            <person name="Hayashi Y."/>
            <person name="Hensch T.K."/>
            <person name="Hirokawa N."/>
            <person name="Hill D."/>
            <person name="Huminiecki L."/>
            <person name="Iacono M."/>
            <person name="Ikeo K."/>
            <person name="Iwama A."/>
            <person name="Ishikawa T."/>
            <person name="Jakt M."/>
            <person name="Kanapin A."/>
            <person name="Katoh M."/>
            <person name="Kawasawa Y."/>
            <person name="Kelso J."/>
            <person name="Kitamura H."/>
            <person name="Kitano H."/>
            <person name="Kollias G."/>
            <person name="Krishnan S.P."/>
            <person name="Kruger A."/>
            <person name="Kummerfeld S.K."/>
            <person name="Kurochkin I.V."/>
            <person name="Lareau L.F."/>
            <person name="Lazarevic D."/>
            <person name="Lipovich L."/>
            <person name="Liu J."/>
            <person name="Liuni S."/>
            <person name="McWilliam S."/>
            <person name="Madan Babu M."/>
            <person name="Madera M."/>
            <person name="Marchionni L."/>
            <person name="Matsuda H."/>
            <person name="Matsuzawa S."/>
            <person name="Miki H."/>
            <person name="Mignone F."/>
            <person name="Miyake S."/>
            <person name="Morris K."/>
            <person name="Mottagui-Tabar S."/>
            <person name="Mulder N."/>
            <person name="Nakano N."/>
            <person name="Nakauchi H."/>
            <person name="Ng P."/>
            <person name="Nilsson R."/>
            <person name="Nishiguchi S."/>
            <person name="Nishikawa S."/>
            <person name="Nori F."/>
            <person name="Ohara O."/>
            <person name="Okazaki Y."/>
            <person name="Orlando V."/>
            <person name="Pang K.C."/>
            <person name="Pavan W.J."/>
            <person name="Pavesi G."/>
            <person name="Pesole G."/>
            <person name="Petrovsky N."/>
            <person name="Piazza S."/>
            <person name="Reed J."/>
            <person name="Reid J.F."/>
            <person name="Ring B.Z."/>
            <person name="Ringwald M."/>
            <person name="Rost B."/>
            <person name="Ruan Y."/>
            <person name="Salzberg S.L."/>
            <person name="Sandelin A."/>
            <person name="Schneider C."/>
            <person name="Schoenbach C."/>
            <person name="Sekiguchi K."/>
            <person name="Semple C.A."/>
            <person name="Seno S."/>
            <person name="Sessa L."/>
            <person name="Sheng Y."/>
            <person name="Shibata Y."/>
            <person name="Shimada H."/>
            <person name="Shimada K."/>
            <person name="Silva D."/>
            <person name="Sinclair B."/>
            <person name="Sperling S."/>
            <person name="Stupka E."/>
            <person name="Sugiura K."/>
            <person name="Sultana R."/>
            <person name="Takenaka Y."/>
            <person name="Taki K."/>
            <person name="Tammoja K."/>
            <person name="Tan S.L."/>
            <person name="Tang S."/>
            <person name="Taylor M.S."/>
            <person name="Tegner J."/>
            <person name="Teichmann S.A."/>
            <person name="Ueda H.R."/>
            <person name="van Nimwegen E."/>
            <person name="Verardo R."/>
            <person name="Wei C.L."/>
            <person name="Yagi K."/>
            <person name="Yamanishi H."/>
            <person name="Zabarovsky E."/>
            <person name="Zhu S."/>
            <person name="Zimmer A."/>
            <person name="Hide W."/>
            <person name="Bult C."/>
            <person name="Grimmond S.M."/>
            <person name="Teasdale R.D."/>
            <person name="Liu E.T."/>
            <person name="Brusic V."/>
            <person name="Quackenbush J."/>
            <person name="Wahlestedt C."/>
            <person name="Mattick J.S."/>
            <person name="Hume D.A."/>
            <person name="Kai C."/>
            <person name="Sasaki D."/>
            <person name="Tomaru Y."/>
            <person name="Fukuda S."/>
            <person name="Kanamori-Katayama M."/>
            <person name="Suzuki M."/>
            <person name="Aoki J."/>
            <person name="Arakawa T."/>
            <person name="Iida J."/>
            <person name="Imamura K."/>
            <person name="Itoh M."/>
            <person name="Kato T."/>
            <person name="Kawaji H."/>
            <person name="Kawagashira N."/>
            <person name="Kawashima T."/>
            <person name="Kojima M."/>
            <person name="Kondo S."/>
            <person name="Konno H."/>
            <person name="Nakano K."/>
            <person name="Ninomiya N."/>
            <person name="Nishio T."/>
            <person name="Okada M."/>
            <person name="Plessy C."/>
            <person name="Shibata K."/>
            <person name="Shiraki T."/>
            <person name="Suzuki S."/>
            <person name="Tagami M."/>
            <person name="Waki K."/>
            <person name="Watahiki A."/>
            <person name="Okamura-Oho Y."/>
            <person name="Suzuki H."/>
            <person name="Kawai J."/>
            <person name="Hayashizaki Y."/>
        </authorList>
    </citation>
    <scope>NUCLEOTIDE SEQUENCE [LARGE SCALE MRNA]</scope>
    <source>
        <strain>C57BL/6J</strain>
        <tissue>Embryonic liver</tissue>
    </source>
</reference>
<accession>Q9CXE6</accession>